<reference key="1">
    <citation type="journal article" date="2000" name="Nature">
        <title>Sequence and analysis of chromosome 1 of the plant Arabidopsis thaliana.</title>
        <authorList>
            <person name="Theologis A."/>
            <person name="Ecker J.R."/>
            <person name="Palm C.J."/>
            <person name="Federspiel N.A."/>
            <person name="Kaul S."/>
            <person name="White O."/>
            <person name="Alonso J."/>
            <person name="Altafi H."/>
            <person name="Araujo R."/>
            <person name="Bowman C.L."/>
            <person name="Brooks S.Y."/>
            <person name="Buehler E."/>
            <person name="Chan A."/>
            <person name="Chao Q."/>
            <person name="Chen H."/>
            <person name="Cheuk R.F."/>
            <person name="Chin C.W."/>
            <person name="Chung M.K."/>
            <person name="Conn L."/>
            <person name="Conway A.B."/>
            <person name="Conway A.R."/>
            <person name="Creasy T.H."/>
            <person name="Dewar K."/>
            <person name="Dunn P."/>
            <person name="Etgu P."/>
            <person name="Feldblyum T.V."/>
            <person name="Feng J.-D."/>
            <person name="Fong B."/>
            <person name="Fujii C.Y."/>
            <person name="Gill J.E."/>
            <person name="Goldsmith A.D."/>
            <person name="Haas B."/>
            <person name="Hansen N.F."/>
            <person name="Hughes B."/>
            <person name="Huizar L."/>
            <person name="Hunter J.L."/>
            <person name="Jenkins J."/>
            <person name="Johnson-Hopson C."/>
            <person name="Khan S."/>
            <person name="Khaykin E."/>
            <person name="Kim C.J."/>
            <person name="Koo H.L."/>
            <person name="Kremenetskaia I."/>
            <person name="Kurtz D.B."/>
            <person name="Kwan A."/>
            <person name="Lam B."/>
            <person name="Langin-Hooper S."/>
            <person name="Lee A."/>
            <person name="Lee J.M."/>
            <person name="Lenz C.A."/>
            <person name="Li J.H."/>
            <person name="Li Y.-P."/>
            <person name="Lin X."/>
            <person name="Liu S.X."/>
            <person name="Liu Z.A."/>
            <person name="Luros J.S."/>
            <person name="Maiti R."/>
            <person name="Marziali A."/>
            <person name="Militscher J."/>
            <person name="Miranda M."/>
            <person name="Nguyen M."/>
            <person name="Nierman W.C."/>
            <person name="Osborne B.I."/>
            <person name="Pai G."/>
            <person name="Peterson J."/>
            <person name="Pham P.K."/>
            <person name="Rizzo M."/>
            <person name="Rooney T."/>
            <person name="Rowley D."/>
            <person name="Sakano H."/>
            <person name="Salzberg S.L."/>
            <person name="Schwartz J.R."/>
            <person name="Shinn P."/>
            <person name="Southwick A.M."/>
            <person name="Sun H."/>
            <person name="Tallon L.J."/>
            <person name="Tambunga G."/>
            <person name="Toriumi M.J."/>
            <person name="Town C.D."/>
            <person name="Utterback T."/>
            <person name="Van Aken S."/>
            <person name="Vaysberg M."/>
            <person name="Vysotskaia V.S."/>
            <person name="Walker M."/>
            <person name="Wu D."/>
            <person name="Yu G."/>
            <person name="Fraser C.M."/>
            <person name="Venter J.C."/>
            <person name="Davis R.W."/>
        </authorList>
    </citation>
    <scope>NUCLEOTIDE SEQUENCE [LARGE SCALE GENOMIC DNA]</scope>
    <source>
        <strain>cv. Columbia</strain>
    </source>
</reference>
<reference key="2">
    <citation type="journal article" date="2017" name="Plant J.">
        <title>Araport11: a complete reannotation of the Arabidopsis thaliana reference genome.</title>
        <authorList>
            <person name="Cheng C.Y."/>
            <person name="Krishnakumar V."/>
            <person name="Chan A.P."/>
            <person name="Thibaud-Nissen F."/>
            <person name="Schobel S."/>
            <person name="Town C.D."/>
        </authorList>
    </citation>
    <scope>GENOME REANNOTATION</scope>
    <source>
        <strain>cv. Columbia</strain>
    </source>
</reference>
<reference key="3">
    <citation type="journal article" date="2002" name="Science">
        <title>Functional annotation of a full-length Arabidopsis cDNA collection.</title>
        <authorList>
            <person name="Seki M."/>
            <person name="Narusaka M."/>
            <person name="Kamiya A."/>
            <person name="Ishida J."/>
            <person name="Satou M."/>
            <person name="Sakurai T."/>
            <person name="Nakajima M."/>
            <person name="Enju A."/>
            <person name="Akiyama K."/>
            <person name="Oono Y."/>
            <person name="Muramatsu M."/>
            <person name="Hayashizaki Y."/>
            <person name="Kawai J."/>
            <person name="Carninci P."/>
            <person name="Itoh M."/>
            <person name="Ishii Y."/>
            <person name="Arakawa T."/>
            <person name="Shibata K."/>
            <person name="Shinagawa A."/>
            <person name="Shinozaki K."/>
        </authorList>
    </citation>
    <scope>NUCLEOTIDE SEQUENCE [LARGE SCALE MRNA]</scope>
    <source>
        <strain>cv. Columbia</strain>
    </source>
</reference>
<reference key="4">
    <citation type="journal article" date="2003" name="Science">
        <title>Empirical analysis of transcriptional activity in the Arabidopsis genome.</title>
        <authorList>
            <person name="Yamada K."/>
            <person name="Lim J."/>
            <person name="Dale J.M."/>
            <person name="Chen H."/>
            <person name="Shinn P."/>
            <person name="Palm C.J."/>
            <person name="Southwick A.M."/>
            <person name="Wu H.C."/>
            <person name="Kim C.J."/>
            <person name="Nguyen M."/>
            <person name="Pham P.K."/>
            <person name="Cheuk R.F."/>
            <person name="Karlin-Newmann G."/>
            <person name="Liu S.X."/>
            <person name="Lam B."/>
            <person name="Sakano H."/>
            <person name="Wu T."/>
            <person name="Yu G."/>
            <person name="Miranda M."/>
            <person name="Quach H.L."/>
            <person name="Tripp M."/>
            <person name="Chang C.H."/>
            <person name="Lee J.M."/>
            <person name="Toriumi M.J."/>
            <person name="Chan M.M."/>
            <person name="Tang C.C."/>
            <person name="Onodera C.S."/>
            <person name="Deng J.M."/>
            <person name="Akiyama K."/>
            <person name="Ansari Y."/>
            <person name="Arakawa T."/>
            <person name="Banh J."/>
            <person name="Banno F."/>
            <person name="Bowser L."/>
            <person name="Brooks S.Y."/>
            <person name="Carninci P."/>
            <person name="Chao Q."/>
            <person name="Choy N."/>
            <person name="Enju A."/>
            <person name="Goldsmith A.D."/>
            <person name="Gurjal M."/>
            <person name="Hansen N.F."/>
            <person name="Hayashizaki Y."/>
            <person name="Johnson-Hopson C."/>
            <person name="Hsuan V.W."/>
            <person name="Iida K."/>
            <person name="Karnes M."/>
            <person name="Khan S."/>
            <person name="Koesema E."/>
            <person name="Ishida J."/>
            <person name="Jiang P.X."/>
            <person name="Jones T."/>
            <person name="Kawai J."/>
            <person name="Kamiya A."/>
            <person name="Meyers C."/>
            <person name="Nakajima M."/>
            <person name="Narusaka M."/>
            <person name="Seki M."/>
            <person name="Sakurai T."/>
            <person name="Satou M."/>
            <person name="Tamse R."/>
            <person name="Vaysberg M."/>
            <person name="Wallender E.K."/>
            <person name="Wong C."/>
            <person name="Yamamura Y."/>
            <person name="Yuan S."/>
            <person name="Shinozaki K."/>
            <person name="Davis R.W."/>
            <person name="Theologis A."/>
            <person name="Ecker J.R."/>
        </authorList>
    </citation>
    <scope>NUCLEOTIDE SEQUENCE [LARGE SCALE MRNA]</scope>
    <source>
        <strain>cv. Columbia</strain>
    </source>
</reference>
<reference key="5">
    <citation type="submission" date="2006-07" db="EMBL/GenBank/DDBJ databases">
        <title>Large-scale analysis of RIKEN Arabidopsis full-length (RAFL) cDNAs.</title>
        <authorList>
            <person name="Totoki Y."/>
            <person name="Seki M."/>
            <person name="Ishida J."/>
            <person name="Nakajima M."/>
            <person name="Enju A."/>
            <person name="Kamiya A."/>
            <person name="Narusaka M."/>
            <person name="Shin-i T."/>
            <person name="Nakagawa M."/>
            <person name="Sakamoto N."/>
            <person name="Oishi K."/>
            <person name="Kohara Y."/>
            <person name="Kobayashi M."/>
            <person name="Toyoda A."/>
            <person name="Sakaki Y."/>
            <person name="Sakurai T."/>
            <person name="Iida K."/>
            <person name="Akiyama K."/>
            <person name="Satou M."/>
            <person name="Toyoda T."/>
            <person name="Konagaya A."/>
            <person name="Carninci P."/>
            <person name="Kawai J."/>
            <person name="Hayashizaki Y."/>
            <person name="Shinozaki K."/>
        </authorList>
    </citation>
    <scope>NUCLEOTIDE SEQUENCE [LARGE SCALE MRNA]</scope>
    <source>
        <strain>cv. Columbia</strain>
    </source>
</reference>
<keyword id="KW-0880">Kelch repeat</keyword>
<keyword id="KW-1185">Reference proteome</keyword>
<keyword id="KW-0677">Repeat</keyword>
<evidence type="ECO:0000305" key="1"/>
<comment type="sequence caution" evidence="1">
    <conflict type="erroneous gene model prediction">
        <sequence resource="EMBL-CDS" id="AAG03124"/>
    </conflict>
    <text>The predicted gene has been split into 2 genes: At1g24793 and At1g24800.</text>
</comment>
<comment type="sequence caution" evidence="1">
    <conflict type="erroneous initiation">
        <sequence resource="EMBL-CDS" id="BAD95425"/>
    </conflict>
    <text>Truncated N-terminus.</text>
</comment>
<name>FBK10_ARATH</name>
<protein>
    <recommendedName>
        <fullName>F-box/kelch-repeat protein At1g24800</fullName>
    </recommendedName>
</protein>
<dbReference type="EMBL" id="AC004133">
    <property type="protein sequence ID" value="AAG03124.1"/>
    <property type="status" value="ALT_SEQ"/>
    <property type="molecule type" value="Genomic_DNA"/>
</dbReference>
<dbReference type="EMBL" id="CP002684">
    <property type="protein sequence ID" value="AEE30564.1"/>
    <property type="molecule type" value="Genomic_DNA"/>
</dbReference>
<dbReference type="EMBL" id="AK118531">
    <property type="protein sequence ID" value="BAC43134.1"/>
    <property type="molecule type" value="mRNA"/>
</dbReference>
<dbReference type="EMBL" id="AY080666">
    <property type="protein sequence ID" value="AAL86342.1"/>
    <property type="molecule type" value="mRNA"/>
</dbReference>
<dbReference type="EMBL" id="AY150377">
    <property type="protein sequence ID" value="AAN12922.1"/>
    <property type="molecule type" value="mRNA"/>
</dbReference>
<dbReference type="EMBL" id="BT010324">
    <property type="protein sequence ID" value="AAQ55275.1"/>
    <property type="molecule type" value="mRNA"/>
</dbReference>
<dbReference type="EMBL" id="AK221705">
    <property type="protein sequence ID" value="BAD95425.1"/>
    <property type="status" value="ALT_INIT"/>
    <property type="molecule type" value="mRNA"/>
</dbReference>
<dbReference type="EMBL" id="AK221721">
    <property type="protein sequence ID" value="BAD93716.1"/>
    <property type="molecule type" value="mRNA"/>
</dbReference>
<dbReference type="EMBL" id="AK221815">
    <property type="protein sequence ID" value="BAD94008.1"/>
    <property type="molecule type" value="mRNA"/>
</dbReference>
<dbReference type="EMBL" id="AK227908">
    <property type="protein sequence ID" value="BAE99878.1"/>
    <property type="molecule type" value="mRNA"/>
</dbReference>
<dbReference type="EMBL" id="AK228522">
    <property type="protein sequence ID" value="BAF00445.1"/>
    <property type="molecule type" value="mRNA"/>
</dbReference>
<dbReference type="EMBL" id="AK230082">
    <property type="protein sequence ID" value="BAF01902.1"/>
    <property type="molecule type" value="mRNA"/>
</dbReference>
<dbReference type="EMBL" id="AK229710">
    <property type="protein sequence ID" value="BAF01548.1"/>
    <property type="molecule type" value="mRNA"/>
</dbReference>
<dbReference type="EMBL" id="AK230005">
    <property type="protein sequence ID" value="BAF01829.1"/>
    <property type="molecule type" value="mRNA"/>
</dbReference>
<dbReference type="PIR" id="B86380">
    <property type="entry name" value="B86380"/>
</dbReference>
<dbReference type="RefSeq" id="NP_001117347.1">
    <property type="nucleotide sequence ID" value="NM_001123875.2"/>
</dbReference>
<dbReference type="RefSeq" id="NP_001117348.1">
    <property type="nucleotide sequence ID" value="NM_001123876.1"/>
</dbReference>
<dbReference type="RefSeq" id="NP_001117350.1">
    <property type="nucleotide sequence ID" value="NM_001123878.4"/>
</dbReference>
<dbReference type="RefSeq" id="NP_001117352.1">
    <property type="nucleotide sequence ID" value="NM_001123880.1"/>
</dbReference>
<dbReference type="RefSeq" id="NP_001185091.1">
    <property type="nucleotide sequence ID" value="NM_001198162.2"/>
</dbReference>
<dbReference type="RefSeq" id="NP_001319077.1">
    <property type="nucleotide sequence ID" value="NM_001332666.1"/>
</dbReference>
<dbReference type="FunCoup" id="P0DI02">
    <property type="interactions" value="7"/>
</dbReference>
<dbReference type="IntAct" id="P0DI02">
    <property type="interactions" value="1"/>
</dbReference>
<dbReference type="STRING" id="3702.P0DI02"/>
<dbReference type="PaxDb" id="3702-AT1G24800.1"/>
<dbReference type="EnsemblPlants" id="AT1G24800.1">
    <property type="protein sequence ID" value="AT1G24800.1"/>
    <property type="gene ID" value="AT1G24800"/>
</dbReference>
<dbReference type="EnsemblPlants" id="AT1G24881.1">
    <property type="protein sequence ID" value="AT1G24881.1"/>
    <property type="gene ID" value="AT1G24881"/>
</dbReference>
<dbReference type="EnsemblPlants" id="AT1G25055.1">
    <property type="protein sequence ID" value="AT1G25055.1"/>
    <property type="gene ID" value="AT1G25055"/>
</dbReference>
<dbReference type="EnsemblPlants" id="AT1G25150.1">
    <property type="protein sequence ID" value="AT1G25150.1"/>
    <property type="gene ID" value="AT1G25150"/>
</dbReference>
<dbReference type="EnsemblPlants" id="AT1G25150.2">
    <property type="protein sequence ID" value="AT1G25150.2"/>
    <property type="gene ID" value="AT1G25150"/>
</dbReference>
<dbReference type="EnsemblPlants" id="AT1G25211.1">
    <property type="protein sequence ID" value="AT1G25211.1"/>
    <property type="gene ID" value="AT1G25211"/>
</dbReference>
<dbReference type="GeneID" id="6240216"/>
<dbReference type="Gramene" id="AT1G24800.1">
    <property type="protein sequence ID" value="AT1G24800.1"/>
    <property type="gene ID" value="AT1G24800"/>
</dbReference>
<dbReference type="Gramene" id="AT1G24881.1">
    <property type="protein sequence ID" value="AT1G24881.1"/>
    <property type="gene ID" value="AT1G24881"/>
</dbReference>
<dbReference type="Gramene" id="AT1G25055.1">
    <property type="protein sequence ID" value="AT1G25055.1"/>
    <property type="gene ID" value="AT1G25055"/>
</dbReference>
<dbReference type="Gramene" id="AT1G25150.1">
    <property type="protein sequence ID" value="AT1G25150.1"/>
    <property type="gene ID" value="AT1G25150"/>
</dbReference>
<dbReference type="Gramene" id="AT1G25150.2">
    <property type="protein sequence ID" value="AT1G25150.2"/>
    <property type="gene ID" value="AT1G25150"/>
</dbReference>
<dbReference type="Gramene" id="AT1G25211.1">
    <property type="protein sequence ID" value="AT1G25211.1"/>
    <property type="gene ID" value="AT1G25211"/>
</dbReference>
<dbReference type="KEGG" id="ath:AT1G24800"/>
<dbReference type="KEGG" id="ath:AT1G24881"/>
<dbReference type="KEGG" id="ath:AT1G25055"/>
<dbReference type="KEGG" id="ath:AT1G25150"/>
<dbReference type="KEGG" id="ath:AT1G25211"/>
<dbReference type="Araport" id="AT1G24800"/>
<dbReference type="TAIR" id="AT1G24800"/>
<dbReference type="HOGENOM" id="CLU_034692_0_0_1"/>
<dbReference type="InParanoid" id="P0DI02"/>
<dbReference type="PhylomeDB" id="P0DI02"/>
<dbReference type="PRO" id="PR:P0DI02"/>
<dbReference type="Proteomes" id="UP000006548">
    <property type="component" value="Chromosome 1"/>
</dbReference>
<dbReference type="ExpressionAtlas" id="P0DI02">
    <property type="expression patterns" value="baseline"/>
</dbReference>
<dbReference type="InterPro" id="IPR006527">
    <property type="entry name" value="F-box-assoc_dom_typ1"/>
</dbReference>
<dbReference type="InterPro" id="IPR017451">
    <property type="entry name" value="F-box-assoc_interact_dom"/>
</dbReference>
<dbReference type="InterPro" id="IPR036047">
    <property type="entry name" value="F-box-like_dom_sf"/>
</dbReference>
<dbReference type="InterPro" id="IPR011043">
    <property type="entry name" value="Gal_Oxase/kelch_b-propeller"/>
</dbReference>
<dbReference type="InterPro" id="IPR050796">
    <property type="entry name" value="SCF_F-box_component"/>
</dbReference>
<dbReference type="NCBIfam" id="TIGR01640">
    <property type="entry name" value="F_box_assoc_1"/>
    <property type="match status" value="1"/>
</dbReference>
<dbReference type="PANTHER" id="PTHR31672">
    <property type="entry name" value="BNACNNG10540D PROTEIN"/>
    <property type="match status" value="1"/>
</dbReference>
<dbReference type="PANTHER" id="PTHR31672:SF13">
    <property type="entry name" value="F-BOX PROTEIN CPR30-LIKE"/>
    <property type="match status" value="1"/>
</dbReference>
<dbReference type="Pfam" id="PF07734">
    <property type="entry name" value="FBA_1"/>
    <property type="match status" value="1"/>
</dbReference>
<dbReference type="SUPFAM" id="SSF81383">
    <property type="entry name" value="F-box domain"/>
    <property type="match status" value="1"/>
</dbReference>
<dbReference type="SUPFAM" id="SSF50965">
    <property type="entry name" value="Galactose oxidase, central domain"/>
    <property type="match status" value="1"/>
</dbReference>
<feature type="chain" id="PRO_0000274944" description="F-box/kelch-repeat protein At1g24800">
    <location>
        <begin position="1"/>
        <end position="433"/>
    </location>
</feature>
<feature type="domain" description="F-box">
    <location>
        <begin position="23"/>
        <end position="71"/>
    </location>
</feature>
<feature type="repeat" description="Kelch 1">
    <location>
        <begin position="170"/>
        <end position="216"/>
    </location>
</feature>
<feature type="repeat" description="Kelch 2">
    <location>
        <begin position="286"/>
        <end position="337"/>
    </location>
</feature>
<feature type="sequence conflict" description="In Ref. 5; BAF00445." evidence="1" ref="5">
    <original>L</original>
    <variation>I</variation>
    <location>
        <position position="38"/>
    </location>
</feature>
<feature type="sequence conflict" description="In Ref. 5; BAD95425." evidence="1" ref="5">
    <original>G</original>
    <variation>R</variation>
    <location>
        <position position="163"/>
    </location>
</feature>
<feature type="sequence conflict" description="In Ref. 5; BAD94008/BAF01548." evidence="1" ref="5">
    <original>A</original>
    <variation>T</variation>
    <location>
        <position position="371"/>
    </location>
</feature>
<feature type="sequence conflict" description="In Ref. 4; AAL86342." evidence="1" ref="4">
    <original>K</original>
    <variation>R</variation>
    <location>
        <position position="429"/>
    </location>
</feature>
<gene>
    <name type="ordered locus">At1g24800</name>
    <name type="ORF">F5A9.18</name>
</gene>
<accession>P0DI02</accession>
<accession>Q0WR04</accession>
<accession>Q56X62</accession>
<accession>Q56XG9</accession>
<accession>Q7GAV1</accession>
<accession>Q8GRJ5</accession>
<accession>Q8RXU7</accession>
<accession>Q9FE36</accession>
<accession>Q9FXK3</accession>
<accession>Q9FXK7</accession>
<proteinExistence type="evidence at transcript level"/>
<organism>
    <name type="scientific">Arabidopsis thaliana</name>
    <name type="common">Mouse-ear cress</name>
    <dbReference type="NCBI Taxonomy" id="3702"/>
    <lineage>
        <taxon>Eukaryota</taxon>
        <taxon>Viridiplantae</taxon>
        <taxon>Streptophyta</taxon>
        <taxon>Embryophyta</taxon>
        <taxon>Tracheophyta</taxon>
        <taxon>Spermatophyta</taxon>
        <taxon>Magnoliopsida</taxon>
        <taxon>eudicotyledons</taxon>
        <taxon>Gunneridae</taxon>
        <taxon>Pentapetalae</taxon>
        <taxon>rosids</taxon>
        <taxon>malvids</taxon>
        <taxon>Brassicales</taxon>
        <taxon>Brassicaceae</taxon>
        <taxon>Camelineae</taxon>
        <taxon>Arabidopsis</taxon>
    </lineage>
</organism>
<sequence length="433" mass="49644">MRRRRCDLQPKRTRMCDLQPKRTSMCDLPPKLVGEKILTRIPITSLRAVRSTCKLWNALTKDRVLGKAAAQFLGFMTMDSKVCSVRFHLRRSKEEEEDTMDLSIKQVDLLNQVEISRVYHCDGLLLCVAKDNSRVVVWNPYLGQTRWIRPRTESNIGDSYALGYDINRNHKILRMVQTRNVSVYRYEIYDLRSNSWRVLEVTPNGEMDPNHPLYGVSVKGNTYFFAHEDSSSGEIDEDGDIIDLEDFLLCFDFTTETFGLRLPLPFHSTIDATVTLSCVRDQQLAVLYHNEGLHSDDRFTTVEFWVTTSIEPNSVSWSKFLTVDMRPLALTGVRFDNDMGATFFIDEDEKVAVVFDLDGYLSTESARYHTAFISGKDGFFKPVTLGVAPNVGEPCPRTGHIPTTYRPPLVCSSTYLPSLVQVNQQRKRKERHV</sequence>